<name>ANXA1_PIG</name>
<keyword id="KW-0002">3D-structure</keyword>
<keyword id="KW-0007">Acetylation</keyword>
<keyword id="KW-1064">Adaptive immunity</keyword>
<keyword id="KW-0041">Annexin</keyword>
<keyword id="KW-0106">Calcium</keyword>
<keyword id="KW-0111">Calcium/phospholipid-binding</keyword>
<keyword id="KW-1003">Cell membrane</keyword>
<keyword id="KW-0966">Cell projection</keyword>
<keyword id="KW-0969">Cilium</keyword>
<keyword id="KW-0963">Cytoplasm</keyword>
<keyword id="KW-0968">Cytoplasmic vesicle</keyword>
<keyword id="KW-0903">Direct protein sequencing</keyword>
<keyword id="KW-1015">Disulfide bond</keyword>
<keyword id="KW-0967">Endosome</keyword>
<keyword id="KW-0391">Immunity</keyword>
<keyword id="KW-0395">Inflammatory response</keyword>
<keyword id="KW-0399">Innate immunity</keyword>
<keyword id="KW-1017">Isopeptide bond</keyword>
<keyword id="KW-0472">Membrane</keyword>
<keyword id="KW-0479">Metal-binding</keyword>
<keyword id="KW-0539">Nucleus</keyword>
<keyword id="KW-0593">Phospholipase A2 inhibitor</keyword>
<keyword id="KW-0597">Phosphoprotein</keyword>
<keyword id="KW-1185">Reference proteome</keyword>
<keyword id="KW-0677">Repeat</keyword>
<keyword id="KW-0964">Secreted</keyword>
<keyword id="KW-0832">Ubl conjugation</keyword>
<reference key="1">
    <citation type="journal article" date="1996" name="Mol. Biol. Cell">
        <title>The association of annexin I with early endosomes is regulated by Ca2+ and requires an intact N-terminal domain.</title>
        <authorList>
            <person name="Seemann J."/>
            <person name="Weber K."/>
            <person name="Osborn M."/>
            <person name="Parton R.G."/>
            <person name="Gerke V."/>
        </authorList>
    </citation>
    <scope>NUCLEOTIDE SEQUENCE [MRNA] OF 6-346</scope>
    <scope>PROTEIN SEQUENCE OF 30-35 AND 214-219</scope>
    <scope>SUBCELLULAR LOCATION</scope>
    <scope>FUNCTION</scope>
    <source>
        <tissue>Lung</tissue>
    </source>
</reference>
<reference key="2">
    <citation type="journal article" date="1986" name="J. Biol. Chem.">
        <title>A calcium-dependent 35-kilodalton substrate for epidermal growth factor receptor/kinase isolated from normal tissue.</title>
        <authorList>
            <person name="De B.K."/>
            <person name="Misono K.S."/>
            <person name="Lukas T.J."/>
            <person name="Mroczkowski B."/>
            <person name="Cohen S."/>
        </authorList>
    </citation>
    <scope>PROTEIN SEQUENCE OF 13-42</scope>
    <scope>PHOSPHORYLATION AT TYR-21 BY EGFR</scope>
    <scope>TISSUE SPECIFICITY</scope>
</reference>
<reference key="3">
    <citation type="journal article" date="2000" name="J. Cell Sci.">
        <title>Intact Ca(2+)-binding sites are required for targeting of annexin 1 to endosomal membranes in living HeLa cells.</title>
        <authorList>
            <person name="Rescher U."/>
            <person name="Zobiack N."/>
            <person name="Gerke V."/>
        </authorList>
    </citation>
    <scope>SUBCELLULAR LOCATION</scope>
    <scope>MUTAGENESIS OF ASP-171</scope>
</reference>
<reference key="4">
    <citation type="journal article" date="2004" name="FEBS Lett.">
        <title>Specific association of annexin 1 with plasma membrane-resident and internalized EGF receptors mediated through the protein core domain.</title>
        <authorList>
            <person name="Radke S."/>
            <person name="Austermann J."/>
            <person name="Russo-Marie F."/>
            <person name="Gerke V."/>
            <person name="Rescher U."/>
        </authorList>
    </citation>
    <scope>INTERACTION WITH EGFR</scope>
    <scope>SUBCELLULAR LOCATION</scope>
</reference>
<reference key="5">
    <citation type="journal article" date="2008" name="Br. J. Pharmacol.">
        <title>Annexin-A1: a pivotal regulator of the innate and adaptive immune systems.</title>
        <authorList>
            <person name="D'Acquisto F."/>
            <person name="Perretti M."/>
            <person name="Flower R.J."/>
        </authorList>
    </citation>
    <scope>REVIEW</scope>
</reference>
<reference evidence="16" key="6">
    <citation type="journal article" date="2001" name="J. Mol. Biol.">
        <title>X-ray structure of full-length annexin 1 and implications for membrane aggregation.</title>
        <authorList>
            <person name="Rosengarth A."/>
            <person name="Gerke V."/>
            <person name="Luecke H."/>
        </authorList>
    </citation>
    <scope>X-RAY CRYSTALLOGRAPHY (1.80 ANGSTROMS)</scope>
    <scope>DISULFIDE BONDS</scope>
    <scope>SUBUNIT</scope>
</reference>
<reference key="7">
    <citation type="journal article" date="2003" name="J. Mol. Biol.">
        <title>A calcium-driven conformational switch of the N-terminal and core domains of annexin A1.</title>
        <authorList>
            <person name="Rosengarth A."/>
            <person name="Luecke H."/>
        </authorList>
    </citation>
    <scope>X-RAY CRYSTALLOGRAPHY (2.03 ANGSTROMS) IN COMPLEX WITH CALCIUM</scope>
    <scope>DISULFIDE BONDS</scope>
    <scope>DOMAIN</scope>
    <scope>SUBUNIT</scope>
</reference>
<evidence type="ECO:0000250" key="1"/>
<evidence type="ECO:0000250" key="2">
    <source>
        <dbReference type="UniProtKB" id="P04083"/>
    </source>
</evidence>
<evidence type="ECO:0000250" key="3">
    <source>
        <dbReference type="UniProtKB" id="P07150"/>
    </source>
</evidence>
<evidence type="ECO:0000250" key="4">
    <source>
        <dbReference type="UniProtKB" id="P10107"/>
    </source>
</evidence>
<evidence type="ECO:0000250" key="5">
    <source>
        <dbReference type="UniProtKB" id="P51662"/>
    </source>
</evidence>
<evidence type="ECO:0000255" key="6">
    <source>
        <dbReference type="PROSITE-ProRule" id="PRU01245"/>
    </source>
</evidence>
<evidence type="ECO:0000256" key="7">
    <source>
        <dbReference type="SAM" id="MobiDB-lite"/>
    </source>
</evidence>
<evidence type="ECO:0000269" key="8">
    <source>
    </source>
</evidence>
<evidence type="ECO:0000269" key="9">
    <source>
    </source>
</evidence>
<evidence type="ECO:0000269" key="10">
    <source>
    </source>
</evidence>
<evidence type="ECO:0000269" key="11">
    <source>
    </source>
</evidence>
<evidence type="ECO:0000269" key="12">
    <source>
    </source>
</evidence>
<evidence type="ECO:0000303" key="13">
    <source>
    </source>
</evidence>
<evidence type="ECO:0000303" key="14">
    <source>
    </source>
</evidence>
<evidence type="ECO:0000305" key="15"/>
<evidence type="ECO:0007744" key="16">
    <source>
        <dbReference type="PDB" id="1HM6"/>
    </source>
</evidence>
<evidence type="ECO:0007744" key="17">
    <source>
        <dbReference type="PDB" id="1MCX"/>
    </source>
</evidence>
<evidence type="ECO:0007829" key="18">
    <source>
        <dbReference type="PDB" id="1HM6"/>
    </source>
</evidence>
<evidence type="ECO:0007829" key="19">
    <source>
        <dbReference type="PDB" id="1MCX"/>
    </source>
</evidence>
<accession>P19619</accession>
<accession>Q29547</accession>
<gene>
    <name type="primary">ANXA1</name>
    <name type="synonym">ANX1</name>
</gene>
<protein>
    <recommendedName>
        <fullName>Annexin A1</fullName>
    </recommendedName>
    <alternativeName>
        <fullName evidence="14">Annexin I</fullName>
    </alternativeName>
    <alternativeName>
        <fullName>Annexin-1</fullName>
    </alternativeName>
    <alternativeName>
        <fullName>Calpactin II</fullName>
    </alternativeName>
    <alternativeName>
        <fullName>Calpactin-2</fullName>
    </alternativeName>
    <alternativeName>
        <fullName>Chromobindin-9</fullName>
    </alternativeName>
    <alternativeName>
        <fullName>Lipocortin I</fullName>
    </alternativeName>
    <alternativeName>
        <fullName>Phospholipase A2 inhibitory protein</fullName>
    </alternativeName>
    <alternativeName>
        <fullName evidence="13">p35</fullName>
    </alternativeName>
    <component>
        <recommendedName>
            <fullName evidence="2">Annexin Ac2-26</fullName>
        </recommendedName>
    </component>
</protein>
<organism>
    <name type="scientific">Sus scrofa</name>
    <name type="common">Pig</name>
    <dbReference type="NCBI Taxonomy" id="9823"/>
    <lineage>
        <taxon>Eukaryota</taxon>
        <taxon>Metazoa</taxon>
        <taxon>Chordata</taxon>
        <taxon>Craniata</taxon>
        <taxon>Vertebrata</taxon>
        <taxon>Euteleostomi</taxon>
        <taxon>Mammalia</taxon>
        <taxon>Eutheria</taxon>
        <taxon>Laurasiatheria</taxon>
        <taxon>Artiodactyla</taxon>
        <taxon>Suina</taxon>
        <taxon>Suidae</taxon>
        <taxon>Sus</taxon>
    </lineage>
</organism>
<proteinExistence type="evidence at protein level"/>
<comment type="function">
    <text evidence="2 4 9 12">Plays important roles in the innate immune response as effector of glucocorticoid-mediated responses and regulator of the inflammatory process. Has anti-inflammatory activity. Plays a role in glucocorticoid-mediated down-regulation of the early phase of the inflammatory response. Contributes to the adaptive immune response by enhancing signaling cascades that are triggered by T-cell activation, regulates differentiation and proliferation of activated T-cells. Promotes the differentiation of T-cells into Th1 cells and negatively regulates differentiation into Th2 cells (By similarity). Has no effect on unstimulated T-cells. Negatively regulates hormone exocytosis via activation of the formyl peptide receptors and reorganization of the actin cytoskeleton (By similarity). Has high affinity for Ca(2+) and can bind up to eight Ca(2+) ions (PubMed:12595246). Displays Ca(2+)-dependent binding to phospholipid membranes (PubMed:8885232). Plays a role in the formation of phagocytic cups and phagosomes. Plays a role in phagocytosis by mediating the Ca(2+)-dependent interaction between phagosomes and the actin cytoskeleton (By similarity).</text>
</comment>
<comment type="function">
    <molecule>Annexin Ac2-26</molecule>
    <text evidence="2">Functions at least in part by activating the formyl peptide receptors and downstream signaling cascades. Promotes chemotaxis of granulocytes and monocytes via activation of the formyl peptide receptors. Promotes rearrangement of the actin cytoskeleton, cell polarization and cell migration. Promotes resolution of inflammation and wound healing. Acts via neutrophil N-formyl peptide receptors to enhance the release of CXCL2.</text>
</comment>
<comment type="subunit">
    <text evidence="2 4">Homodimer; non-covalently linked (By similarity). Homodimer; linked by transglutamylation. Homodimers linked by transglutamylation are observed in placenta, but not in other tissues. Interacts with S100A11. Heterotetramer, formed by two molecules each of S100A11 and ANXA1 (By similarity). Interacts with DYSF (By similarity). Interacts with EGFR (By similarity).</text>
</comment>
<comment type="subcellular location">
    <subcellularLocation>
        <location evidence="3">Nucleus</location>
    </subcellularLocation>
    <subcellularLocation>
        <location evidence="8 10">Cytoplasm</location>
    </subcellularLocation>
    <subcellularLocation>
        <location evidence="4">Cell projection</location>
        <location evidence="4">Cilium</location>
    </subcellularLocation>
    <subcellularLocation>
        <location evidence="5">Basolateral cell membrane</location>
    </subcellularLocation>
    <subcellularLocation>
        <location evidence="4">Lateral cell membrane</location>
    </subcellularLocation>
    <subcellularLocation>
        <location evidence="8 12">Early endosome</location>
    </subcellularLocation>
    <subcellularLocation>
        <location evidence="10 11">Cell membrane</location>
        <topology evidence="11">Peripheral membrane protein</topology>
    </subcellularLocation>
    <subcellularLocation>
        <location evidence="8 10">Cytoplasmic vesicle membrane</location>
        <topology evidence="15">Peripheral membrane protein</topology>
        <orientation evidence="15">Cytoplasmic side</orientation>
    </subcellularLocation>
    <subcellularLocation>
        <location evidence="4">Apical cell membrane</location>
    </subcellularLocation>
    <subcellularLocation>
        <location evidence="4">Membrane</location>
        <topology evidence="4">Peripheral membrane protein</topology>
    </subcellularLocation>
    <subcellularLocation>
        <location evidence="3">Endosome</location>
    </subcellularLocation>
    <subcellularLocation>
        <location evidence="4">Secreted</location>
    </subcellularLocation>
    <subcellularLocation>
        <location evidence="2">Secreted</location>
        <location evidence="2">Extracellular space</location>
    </subcellularLocation>
    <subcellularLocation>
        <location evidence="2">Cell membrane</location>
        <topology evidence="2">Peripheral membrane protein</topology>
        <orientation evidence="2">Extracellular side</orientation>
    </subcellularLocation>
    <subcellularLocation>
        <location evidence="4">Secreted</location>
        <location evidence="4">Extracellular exosome</location>
    </subcellularLocation>
    <subcellularLocation>
        <location evidence="4">Cytoplasmic vesicle</location>
        <location evidence="4">Secretory vesicle lumen</location>
    </subcellularLocation>
    <subcellularLocation>
        <location evidence="4">Cell projection</location>
        <location evidence="4">Phagocytic cup</location>
    </subcellularLocation>
    <text evidence="2 4 11">Colocalizes with actin fibers at phagocytic cups. Secreted, at least in part via exosomes and other secretory vesicles. Detected in exosomes and other extracellular vesicles. Secretion is increased in response to wounding and inflammation (By similarity). Alternatively, the secretion is dependent on protein unfolding and facilitated by the cargo receptor TMED10; it results in the protein translocation from the cytoplasm into ERGIC (endoplasmic reticulum-Golgi intermediate compartment) followed by vesicle entry and secretion (By similarity). Detected in gelatinase granules in resting neutrophils. Neutrophil adhesion to endothelial cells stimulates secretion via gelatinase granules, but foreign particle phagocytosis has no effect. Displays calcium-dependent binding to phospholipid membranes (PubMed:3020049).</text>
</comment>
<comment type="tissue specificity">
    <text evidence="11">Detected in lung and spleen (at protein level).</text>
</comment>
<comment type="domain">
    <text evidence="9">The full-length protein can bind eight Ca(2+) ions via the annexin repeats. Calcium binding causes a major conformation change that modifies dimer contacts and leads to surface exposure of the N-terminal phosphorylation sites; in the absence of Ca(2+), these sites are buried in the interior of the protein core. The N-terminal region becomes disordered in response to calcium-binding.</text>
</comment>
<comment type="PTM">
    <text evidence="2 11">Phosphorylated by EGFR (PubMed:3020049). Phosphorylated by protein kinase C and TRPM7 (By similarity). Phosphorylated in response to EGF treatment (PubMed:3020049).</text>
</comment>
<comment type="PTM">
    <text evidence="4">Sumoylated.</text>
</comment>
<comment type="PTM">
    <text evidence="2">Proteolytically cleaved by cathepsin CTSG to release the active N-terminal peptide Ac2-26.</text>
</comment>
<comment type="miscellaneous">
    <text evidence="15">Was originally identified as calcium and phospholipid binding protein that displays Ca(2+)-dependent binding to phospholipid membranes and can promote membrane aggregation in vitro. Was initially identified as inhibitor of phospholipase A2 activity (in vitro). Inhibition of phospholipase activity is mediated via its phospholipid binding activity that limits the access of phospholipase to its substrates.</text>
</comment>
<comment type="similarity">
    <text evidence="6 15">Belongs to the annexin family.</text>
</comment>
<dbReference type="EMBL" id="X95108">
    <property type="protein sequence ID" value="CAA64477.1"/>
    <property type="molecule type" value="mRNA"/>
</dbReference>
<dbReference type="RefSeq" id="NP_001157470.1">
    <property type="nucleotide sequence ID" value="NM_001163998.1"/>
</dbReference>
<dbReference type="PDB" id="1HM6">
    <property type="method" value="X-ray"/>
    <property type="resolution" value="1.80 A"/>
    <property type="chains" value="A/B=1-346"/>
</dbReference>
<dbReference type="PDB" id="1MCX">
    <property type="method" value="X-ray"/>
    <property type="resolution" value="2.03 A"/>
    <property type="chains" value="A=1-346"/>
</dbReference>
<dbReference type="PDBsum" id="1HM6"/>
<dbReference type="PDBsum" id="1MCX"/>
<dbReference type="SMR" id="P19619"/>
<dbReference type="FunCoup" id="P19619">
    <property type="interactions" value="232"/>
</dbReference>
<dbReference type="STRING" id="9823.ENSSSCP00000005658"/>
<dbReference type="iPTMnet" id="P19619"/>
<dbReference type="PaxDb" id="9823-ENSSSCP00000005658"/>
<dbReference type="PeptideAtlas" id="P19619"/>
<dbReference type="GeneID" id="396942"/>
<dbReference type="KEGG" id="ssc:396942"/>
<dbReference type="CTD" id="301"/>
<dbReference type="eggNOG" id="KOG0819">
    <property type="taxonomic scope" value="Eukaryota"/>
</dbReference>
<dbReference type="InParanoid" id="P19619"/>
<dbReference type="OrthoDB" id="37886at2759"/>
<dbReference type="EvolutionaryTrace" id="P19619"/>
<dbReference type="Proteomes" id="UP000008227">
    <property type="component" value="Unplaced"/>
</dbReference>
<dbReference type="Proteomes" id="UP000314985">
    <property type="component" value="Unplaced"/>
</dbReference>
<dbReference type="Proteomes" id="UP000694570">
    <property type="component" value="Unplaced"/>
</dbReference>
<dbReference type="Proteomes" id="UP000694571">
    <property type="component" value="Unplaced"/>
</dbReference>
<dbReference type="Proteomes" id="UP000694720">
    <property type="component" value="Unplaced"/>
</dbReference>
<dbReference type="Proteomes" id="UP000694722">
    <property type="component" value="Unplaced"/>
</dbReference>
<dbReference type="Proteomes" id="UP000694723">
    <property type="component" value="Unplaced"/>
</dbReference>
<dbReference type="Proteomes" id="UP000694724">
    <property type="component" value="Unplaced"/>
</dbReference>
<dbReference type="Proteomes" id="UP000694725">
    <property type="component" value="Unplaced"/>
</dbReference>
<dbReference type="Proteomes" id="UP000694726">
    <property type="component" value="Unplaced"/>
</dbReference>
<dbReference type="Proteomes" id="UP000694727">
    <property type="component" value="Unplaced"/>
</dbReference>
<dbReference type="Proteomes" id="UP000694728">
    <property type="component" value="Unplaced"/>
</dbReference>
<dbReference type="GO" id="GO:0016324">
    <property type="term" value="C:apical plasma membrane"/>
    <property type="evidence" value="ECO:0000250"/>
    <property type="project" value="UniProtKB"/>
</dbReference>
<dbReference type="GO" id="GO:0016323">
    <property type="term" value="C:basolateral plasma membrane"/>
    <property type="evidence" value="ECO:0007669"/>
    <property type="project" value="UniProtKB-SubCell"/>
</dbReference>
<dbReference type="GO" id="GO:0005737">
    <property type="term" value="C:cytoplasm"/>
    <property type="evidence" value="ECO:0000318"/>
    <property type="project" value="GO_Central"/>
</dbReference>
<dbReference type="GO" id="GO:0031901">
    <property type="term" value="C:early endosome membrane"/>
    <property type="evidence" value="ECO:0000314"/>
    <property type="project" value="UniProtKB"/>
</dbReference>
<dbReference type="GO" id="GO:0070062">
    <property type="term" value="C:extracellular exosome"/>
    <property type="evidence" value="ECO:0000250"/>
    <property type="project" value="UniProtKB"/>
</dbReference>
<dbReference type="GO" id="GO:0005615">
    <property type="term" value="C:extracellular space"/>
    <property type="evidence" value="ECO:0000250"/>
    <property type="project" value="UniProtKB"/>
</dbReference>
<dbReference type="GO" id="GO:0016328">
    <property type="term" value="C:lateral plasma membrane"/>
    <property type="evidence" value="ECO:0000250"/>
    <property type="project" value="UniProtKB"/>
</dbReference>
<dbReference type="GO" id="GO:0031514">
    <property type="term" value="C:motile cilium"/>
    <property type="evidence" value="ECO:0000250"/>
    <property type="project" value="UniProtKB"/>
</dbReference>
<dbReference type="GO" id="GO:0005634">
    <property type="term" value="C:nucleus"/>
    <property type="evidence" value="ECO:0000250"/>
    <property type="project" value="UniProtKB"/>
</dbReference>
<dbReference type="GO" id="GO:0001891">
    <property type="term" value="C:phagocytic cup"/>
    <property type="evidence" value="ECO:0007669"/>
    <property type="project" value="UniProtKB-SubCell"/>
</dbReference>
<dbReference type="GO" id="GO:0005886">
    <property type="term" value="C:plasma membrane"/>
    <property type="evidence" value="ECO:0000250"/>
    <property type="project" value="UniProtKB"/>
</dbReference>
<dbReference type="GO" id="GO:0012506">
    <property type="term" value="C:vesicle membrane"/>
    <property type="evidence" value="ECO:0000318"/>
    <property type="project" value="GO_Central"/>
</dbReference>
<dbReference type="GO" id="GO:0005509">
    <property type="term" value="F:calcium ion binding"/>
    <property type="evidence" value="ECO:0000314"/>
    <property type="project" value="UniProtKB"/>
</dbReference>
<dbReference type="GO" id="GO:0005544">
    <property type="term" value="F:calcium-dependent phospholipid binding"/>
    <property type="evidence" value="ECO:0000314"/>
    <property type="project" value="UniProtKB"/>
</dbReference>
<dbReference type="GO" id="GO:0001786">
    <property type="term" value="F:phosphatidylserine binding"/>
    <property type="evidence" value="ECO:0000318"/>
    <property type="project" value="GO_Central"/>
</dbReference>
<dbReference type="GO" id="GO:0019834">
    <property type="term" value="F:phospholipase A2 inhibitor activity"/>
    <property type="evidence" value="ECO:0007669"/>
    <property type="project" value="UniProtKB-KW"/>
</dbReference>
<dbReference type="GO" id="GO:0030036">
    <property type="term" value="P:actin cytoskeleton organization"/>
    <property type="evidence" value="ECO:0000250"/>
    <property type="project" value="UniProtKB"/>
</dbReference>
<dbReference type="GO" id="GO:0002250">
    <property type="term" value="P:adaptive immune response"/>
    <property type="evidence" value="ECO:0007669"/>
    <property type="project" value="UniProtKB-KW"/>
</dbReference>
<dbReference type="GO" id="GO:0071385">
    <property type="term" value="P:cellular response to glucocorticoid stimulus"/>
    <property type="evidence" value="ECO:0000250"/>
    <property type="project" value="UniProtKB"/>
</dbReference>
<dbReference type="GO" id="GO:0007187">
    <property type="term" value="P:G protein-coupled receptor signaling pathway, coupled to cyclic nucleotide second messenger"/>
    <property type="evidence" value="ECO:0000250"/>
    <property type="project" value="UniProtKB"/>
</dbReference>
<dbReference type="GO" id="GO:0071621">
    <property type="term" value="P:granulocyte chemotaxis"/>
    <property type="evidence" value="ECO:0000250"/>
    <property type="project" value="UniProtKB"/>
</dbReference>
<dbReference type="GO" id="GO:0006954">
    <property type="term" value="P:inflammatory response"/>
    <property type="evidence" value="ECO:0000250"/>
    <property type="project" value="UniProtKB"/>
</dbReference>
<dbReference type="GO" id="GO:0045087">
    <property type="term" value="P:innate immune response"/>
    <property type="evidence" value="ECO:0007669"/>
    <property type="project" value="UniProtKB-KW"/>
</dbReference>
<dbReference type="GO" id="GO:0002548">
    <property type="term" value="P:monocyte chemotaxis"/>
    <property type="evidence" value="ECO:0000250"/>
    <property type="project" value="UniProtKB"/>
</dbReference>
<dbReference type="GO" id="GO:0045920">
    <property type="term" value="P:negative regulation of exocytosis"/>
    <property type="evidence" value="ECO:0000250"/>
    <property type="project" value="UniProtKB"/>
</dbReference>
<dbReference type="GO" id="GO:0045629">
    <property type="term" value="P:negative regulation of T-helper 2 cell differentiation"/>
    <property type="evidence" value="ECO:0000250"/>
    <property type="project" value="UniProtKB"/>
</dbReference>
<dbReference type="GO" id="GO:0042119">
    <property type="term" value="P:neutrophil activation"/>
    <property type="evidence" value="ECO:0000250"/>
    <property type="project" value="UniProtKB"/>
</dbReference>
<dbReference type="GO" id="GO:0006909">
    <property type="term" value="P:phagocytosis"/>
    <property type="evidence" value="ECO:0000250"/>
    <property type="project" value="UniProtKB"/>
</dbReference>
<dbReference type="GO" id="GO:0032743">
    <property type="term" value="P:positive regulation of interleukin-2 production"/>
    <property type="evidence" value="ECO:0000250"/>
    <property type="project" value="UniProtKB"/>
</dbReference>
<dbReference type="GO" id="GO:0042102">
    <property type="term" value="P:positive regulation of T cell proliferation"/>
    <property type="evidence" value="ECO:0000250"/>
    <property type="project" value="UniProtKB"/>
</dbReference>
<dbReference type="GO" id="GO:0045627">
    <property type="term" value="P:positive regulation of T-helper 1 cell differentiation"/>
    <property type="evidence" value="ECO:0000250"/>
    <property type="project" value="UniProtKB"/>
</dbReference>
<dbReference type="GO" id="GO:0090303">
    <property type="term" value="P:positive regulation of wound healing"/>
    <property type="evidence" value="ECO:0000250"/>
    <property type="project" value="UniProtKB"/>
</dbReference>
<dbReference type="GO" id="GO:0008360">
    <property type="term" value="P:regulation of cell shape"/>
    <property type="evidence" value="ECO:0000250"/>
    <property type="project" value="UniProtKB"/>
</dbReference>
<dbReference type="GO" id="GO:0046883">
    <property type="term" value="P:regulation of hormone secretion"/>
    <property type="evidence" value="ECO:0000250"/>
    <property type="project" value="UniProtKB"/>
</dbReference>
<dbReference type="GO" id="GO:0050727">
    <property type="term" value="P:regulation of inflammatory response"/>
    <property type="evidence" value="ECO:0000250"/>
    <property type="project" value="UniProtKB"/>
</dbReference>
<dbReference type="GO" id="GO:0032652">
    <property type="term" value="P:regulation of interleukin-1 production"/>
    <property type="evidence" value="ECO:0000250"/>
    <property type="project" value="UniProtKB"/>
</dbReference>
<dbReference type="GO" id="GO:0002685">
    <property type="term" value="P:regulation of leukocyte migration"/>
    <property type="evidence" value="ECO:0000250"/>
    <property type="project" value="UniProtKB"/>
</dbReference>
<dbReference type="GO" id="GO:0007165">
    <property type="term" value="P:signal transduction"/>
    <property type="evidence" value="ECO:0000318"/>
    <property type="project" value="GO_Central"/>
</dbReference>
<dbReference type="DisProt" id="DP01963"/>
<dbReference type="FunFam" id="1.10.220.10:FF:000001">
    <property type="entry name" value="Annexin"/>
    <property type="match status" value="1"/>
</dbReference>
<dbReference type="FunFam" id="1.10.220.10:FF:000002">
    <property type="entry name" value="Annexin"/>
    <property type="match status" value="1"/>
</dbReference>
<dbReference type="FunFam" id="1.10.220.10:FF:000003">
    <property type="entry name" value="Annexin"/>
    <property type="match status" value="1"/>
</dbReference>
<dbReference type="FunFam" id="1.10.220.10:FF:000007">
    <property type="entry name" value="Annexin"/>
    <property type="match status" value="1"/>
</dbReference>
<dbReference type="Gene3D" id="1.10.220.10">
    <property type="entry name" value="Annexin"/>
    <property type="match status" value="4"/>
</dbReference>
<dbReference type="IDEAL" id="IID50311"/>
<dbReference type="InterPro" id="IPR001464">
    <property type="entry name" value="Annexin"/>
</dbReference>
<dbReference type="InterPro" id="IPR018502">
    <property type="entry name" value="Annexin_repeat"/>
</dbReference>
<dbReference type="InterPro" id="IPR018252">
    <property type="entry name" value="Annexin_repeat_CS"/>
</dbReference>
<dbReference type="InterPro" id="IPR037104">
    <property type="entry name" value="Annexin_sf"/>
</dbReference>
<dbReference type="InterPro" id="IPR002388">
    <property type="entry name" value="ANX1"/>
</dbReference>
<dbReference type="PANTHER" id="PTHR10502">
    <property type="entry name" value="ANNEXIN"/>
    <property type="match status" value="1"/>
</dbReference>
<dbReference type="PANTHER" id="PTHR10502:SF17">
    <property type="entry name" value="ANNEXIN A1"/>
    <property type="match status" value="1"/>
</dbReference>
<dbReference type="Pfam" id="PF00191">
    <property type="entry name" value="Annexin"/>
    <property type="match status" value="4"/>
</dbReference>
<dbReference type="PRINTS" id="PR00196">
    <property type="entry name" value="ANNEXIN"/>
</dbReference>
<dbReference type="PRINTS" id="PR00197">
    <property type="entry name" value="ANNEXINI"/>
</dbReference>
<dbReference type="SMART" id="SM00335">
    <property type="entry name" value="ANX"/>
    <property type="match status" value="4"/>
</dbReference>
<dbReference type="SUPFAM" id="SSF47874">
    <property type="entry name" value="Annexin"/>
    <property type="match status" value="1"/>
</dbReference>
<dbReference type="PROSITE" id="PS00223">
    <property type="entry name" value="ANNEXIN_1"/>
    <property type="match status" value="3"/>
</dbReference>
<dbReference type="PROSITE" id="PS51897">
    <property type="entry name" value="ANNEXIN_2"/>
    <property type="match status" value="4"/>
</dbReference>
<feature type="initiator methionine" description="Removed" evidence="2">
    <location>
        <position position="1"/>
    </location>
</feature>
<feature type="chain" id="PRO_0000067462" description="Annexin A1">
    <location>
        <begin position="2"/>
        <end position="346"/>
    </location>
</feature>
<feature type="peptide" id="PRO_0000454559" description="Annexin Ac2-26" evidence="2">
    <location>
        <begin position="2"/>
        <end position="26"/>
    </location>
</feature>
<feature type="repeat" description="Annexin 1" evidence="6">
    <location>
        <begin position="42"/>
        <end position="113"/>
    </location>
</feature>
<feature type="repeat" description="Annexin 2" evidence="6">
    <location>
        <begin position="114"/>
        <end position="185"/>
    </location>
</feature>
<feature type="repeat" description="Annexin 3" evidence="6">
    <location>
        <begin position="197"/>
        <end position="269"/>
    </location>
</feature>
<feature type="repeat" description="Annexin 4" evidence="6">
    <location>
        <begin position="273"/>
        <end position="344"/>
    </location>
</feature>
<feature type="region of interest" description="Disordered" evidence="7">
    <location>
        <begin position="25"/>
        <end position="47"/>
    </location>
</feature>
<feature type="binding site" evidence="17">
    <location>
        <position position="59"/>
    </location>
    <ligand>
        <name>Ca(2+)</name>
        <dbReference type="ChEBI" id="CHEBI:29108"/>
        <label>1</label>
    </ligand>
</feature>
<feature type="binding site" evidence="17">
    <location>
        <position position="60"/>
    </location>
    <ligand>
        <name>Ca(2+)</name>
        <dbReference type="ChEBI" id="CHEBI:29108"/>
        <label>1</label>
    </ligand>
</feature>
<feature type="binding site" evidence="17">
    <location>
        <position position="62"/>
    </location>
    <ligand>
        <name>Ca(2+)</name>
        <dbReference type="ChEBI" id="CHEBI:29108"/>
        <label>1</label>
    </ligand>
</feature>
<feature type="binding site" evidence="17">
    <location>
        <position position="97"/>
    </location>
    <ligand>
        <name>Ca(2+)</name>
        <dbReference type="ChEBI" id="CHEBI:29108"/>
        <label>2</label>
    </ligand>
</feature>
<feature type="binding site" evidence="17">
    <location>
        <position position="100"/>
    </location>
    <ligand>
        <name>Ca(2+)</name>
        <dbReference type="ChEBI" id="CHEBI:29108"/>
        <label>2</label>
    </ligand>
</feature>
<feature type="binding site" evidence="17">
    <location>
        <position position="105"/>
    </location>
    <ligand>
        <name>Ca(2+)</name>
        <dbReference type="ChEBI" id="CHEBI:29108"/>
        <label>2</label>
    </ligand>
</feature>
<feature type="binding site" evidence="17">
    <location>
        <position position="127"/>
    </location>
    <ligand>
        <name>Ca(2+)</name>
        <dbReference type="ChEBI" id="CHEBI:29108"/>
        <label>3</label>
    </ligand>
</feature>
<feature type="binding site" evidence="17">
    <location>
        <position position="129"/>
    </location>
    <ligand>
        <name>Ca(2+)</name>
        <dbReference type="ChEBI" id="CHEBI:29108"/>
        <label>3</label>
    </ligand>
</feature>
<feature type="binding site" evidence="17">
    <location>
        <position position="131"/>
    </location>
    <ligand>
        <name>Ca(2+)</name>
        <dbReference type="ChEBI" id="CHEBI:29108"/>
        <label>3</label>
    </ligand>
</feature>
<feature type="binding site" evidence="17">
    <location>
        <position position="132"/>
    </location>
    <ligand>
        <name>Ca(2+)</name>
        <dbReference type="ChEBI" id="CHEBI:29108"/>
        <label>4</label>
    </ligand>
</feature>
<feature type="binding site" evidence="17">
    <location>
        <position position="134"/>
    </location>
    <ligand>
        <name>Ca(2+)</name>
        <dbReference type="ChEBI" id="CHEBI:29108"/>
        <label>4</label>
    </ligand>
</feature>
<feature type="binding site" evidence="17">
    <location>
        <position position="171"/>
    </location>
    <ligand>
        <name>Ca(2+)</name>
        <dbReference type="ChEBI" id="CHEBI:29108"/>
        <label>3</label>
    </ligand>
</feature>
<feature type="binding site" evidence="17">
    <location>
        <position position="210"/>
    </location>
    <ligand>
        <name>Ca(2+)</name>
        <dbReference type="ChEBI" id="CHEBI:29108"/>
        <label>5</label>
    </ligand>
</feature>
<feature type="binding site" evidence="17">
    <location>
        <position position="213"/>
    </location>
    <ligand>
        <name>Ca(2+)</name>
        <dbReference type="ChEBI" id="CHEBI:29108"/>
        <label>5</label>
    </ligand>
</feature>
<feature type="binding site" evidence="17">
    <location>
        <position position="215"/>
    </location>
    <ligand>
        <name>Ca(2+)</name>
        <dbReference type="ChEBI" id="CHEBI:29108"/>
        <label>5</label>
    </ligand>
</feature>
<feature type="binding site" evidence="17">
    <location>
        <position position="253"/>
    </location>
    <ligand>
        <name>Ca(2+)</name>
        <dbReference type="ChEBI" id="CHEBI:29108"/>
        <label>6</label>
    </ligand>
</feature>
<feature type="binding site" evidence="17">
    <location>
        <position position="255"/>
    </location>
    <ligand>
        <name>Ca(2+)</name>
        <dbReference type="ChEBI" id="CHEBI:29108"/>
        <label>5</label>
    </ligand>
</feature>
<feature type="binding site" evidence="17">
    <location>
        <position position="256"/>
    </location>
    <ligand>
        <name>Ca(2+)</name>
        <dbReference type="ChEBI" id="CHEBI:29108"/>
        <label>6</label>
    </ligand>
</feature>
<feature type="binding site" evidence="17">
    <location>
        <position position="261"/>
    </location>
    <ligand>
        <name>Ca(2+)</name>
        <dbReference type="ChEBI" id="CHEBI:29108"/>
        <label>6</label>
    </ligand>
</feature>
<feature type="binding site" evidence="17">
    <location>
        <position position="286"/>
    </location>
    <ligand>
        <name>Ca(2+)</name>
        <dbReference type="ChEBI" id="CHEBI:29108"/>
        <label>7</label>
    </ligand>
</feature>
<feature type="binding site" evidence="17">
    <location>
        <position position="288"/>
    </location>
    <ligand>
        <name>Ca(2+)</name>
        <dbReference type="ChEBI" id="CHEBI:29108"/>
        <label>7</label>
    </ligand>
</feature>
<feature type="binding site" evidence="17">
    <location>
        <position position="290"/>
    </location>
    <ligand>
        <name>Ca(2+)</name>
        <dbReference type="ChEBI" id="CHEBI:29108"/>
        <label>7</label>
    </ligand>
</feature>
<feature type="binding site" evidence="17">
    <location>
        <position position="328"/>
    </location>
    <ligand>
        <name>Ca(2+)</name>
        <dbReference type="ChEBI" id="CHEBI:29108"/>
        <label>8</label>
    </ligand>
</feature>
<feature type="binding site" evidence="17">
    <location>
        <position position="330"/>
    </location>
    <ligand>
        <name>Ca(2+)</name>
        <dbReference type="ChEBI" id="CHEBI:29108"/>
        <label>7</label>
    </ligand>
</feature>
<feature type="binding site" evidence="17">
    <location>
        <position position="331"/>
    </location>
    <ligand>
        <name>Ca(2+)</name>
        <dbReference type="ChEBI" id="CHEBI:29108"/>
        <label>8</label>
    </ligand>
</feature>
<feature type="binding site" evidence="17">
    <location>
        <position position="336"/>
    </location>
    <ligand>
        <name>Ca(2+)</name>
        <dbReference type="ChEBI" id="CHEBI:29108"/>
        <label>8</label>
    </ligand>
</feature>
<feature type="site" description="Cleavage; by CTSG" evidence="2">
    <location>
        <begin position="26"/>
        <end position="27"/>
    </location>
</feature>
<feature type="modified residue" description="N-acetylalanine" evidence="2">
    <location>
        <position position="2"/>
    </location>
</feature>
<feature type="modified residue" description="Phosphoserine; by TRPM7" evidence="2">
    <location>
        <position position="5"/>
    </location>
</feature>
<feature type="modified residue" description="Phosphotyrosine; by EGFR" evidence="11">
    <location>
        <position position="21"/>
    </location>
</feature>
<feature type="modified residue" description="Phosphoserine" evidence="2">
    <location>
        <position position="34"/>
    </location>
</feature>
<feature type="modified residue" description="Phosphoserine" evidence="2">
    <location>
        <position position="37"/>
    </location>
</feature>
<feature type="modified residue" description="Phosphothreonine" evidence="2">
    <location>
        <position position="41"/>
    </location>
</feature>
<feature type="modified residue" description="N6-acetyllysine" evidence="4">
    <location>
        <position position="58"/>
    </location>
</feature>
<feature type="modified residue" description="Phosphothreonine" evidence="2">
    <location>
        <position position="136"/>
    </location>
</feature>
<feature type="modified residue" description="N6-acetyllysine" evidence="2">
    <location>
        <position position="239"/>
    </location>
</feature>
<feature type="modified residue" description="N6-acetyllysine" evidence="2">
    <location>
        <position position="312"/>
    </location>
</feature>
<feature type="disulfide bond" evidence="16 17">
    <location>
        <begin position="324"/>
        <end position="343"/>
    </location>
</feature>
<feature type="cross-link" description="Isoglutamyl lysine isopeptide (Gln-Lys) (interchain with K-?)" evidence="1">
    <location>
        <position position="19"/>
    </location>
</feature>
<feature type="cross-link" description="Glycyl lysine isopeptide (Lys-Gly) (interchain with G-Cter in SUMO1); alternate" evidence="2">
    <location>
        <position position="214"/>
    </location>
</feature>
<feature type="cross-link" description="Glycyl lysine isopeptide (Lys-Gly) (interchain with G-Cter in SUMO2); alternate" evidence="2">
    <location>
        <position position="214"/>
    </location>
</feature>
<feature type="cross-link" description="Glycyl lysine isopeptide (Lys-Gly) (interchain with G-Cter in SUMO1)" evidence="4">
    <location>
        <position position="257"/>
    </location>
</feature>
<feature type="cross-link" description="Glycyl lysine isopeptide (Lys-Gly) (interchain with G-Cter in SUMO1)" evidence="2">
    <location>
        <position position="332"/>
    </location>
</feature>
<feature type="mutagenesis site" description="Abolishes calcium-dependent interaction with membranes." evidence="8">
    <original>D</original>
    <variation>A</variation>
    <location>
        <position position="171"/>
    </location>
</feature>
<feature type="sequence conflict" description="In Ref. 2; AA sequence." evidence="15" ref="2">
    <original>T</original>
    <variation>S</variation>
    <location>
        <position position="41"/>
    </location>
</feature>
<feature type="helix" evidence="18">
    <location>
        <begin position="3"/>
        <end position="16"/>
    </location>
</feature>
<feature type="helix" evidence="18">
    <location>
        <begin position="18"/>
        <end position="27"/>
    </location>
</feature>
<feature type="helix" evidence="18">
    <location>
        <begin position="44"/>
        <end position="55"/>
    </location>
</feature>
<feature type="helix" evidence="18">
    <location>
        <begin position="62"/>
        <end position="70"/>
    </location>
</feature>
<feature type="helix" evidence="18">
    <location>
        <begin position="74"/>
        <end position="88"/>
    </location>
</feature>
<feature type="helix" evidence="18">
    <location>
        <begin position="92"/>
        <end position="99"/>
    </location>
</feature>
<feature type="helix" evidence="18">
    <location>
        <begin position="102"/>
        <end position="112"/>
    </location>
</feature>
<feature type="helix" evidence="18">
    <location>
        <begin position="115"/>
        <end position="127"/>
    </location>
</feature>
<feature type="strand" evidence="18">
    <location>
        <begin position="128"/>
        <end position="130"/>
    </location>
</feature>
<feature type="helix" evidence="18">
    <location>
        <begin position="134"/>
        <end position="143"/>
    </location>
</feature>
<feature type="helix" evidence="18">
    <location>
        <begin position="146"/>
        <end position="158"/>
    </location>
</feature>
<feature type="helix" evidence="18">
    <location>
        <begin position="164"/>
        <end position="171"/>
    </location>
</feature>
<feature type="helix" evidence="18">
    <location>
        <begin position="174"/>
        <end position="184"/>
    </location>
</feature>
<feature type="helix" evidence="18">
    <location>
        <begin position="196"/>
        <end position="209"/>
    </location>
</feature>
<feature type="turn" evidence="18">
    <location>
        <begin position="210"/>
        <end position="212"/>
    </location>
</feature>
<feature type="strand" evidence="18">
    <location>
        <begin position="213"/>
        <end position="215"/>
    </location>
</feature>
<feature type="helix" evidence="18">
    <location>
        <begin position="218"/>
        <end position="227"/>
    </location>
</feature>
<feature type="helix" evidence="18">
    <location>
        <begin position="230"/>
        <end position="241"/>
    </location>
</feature>
<feature type="helix" evidence="19">
    <location>
        <begin position="248"/>
        <end position="255"/>
    </location>
</feature>
<feature type="helix" evidence="18">
    <location>
        <begin position="258"/>
        <end position="272"/>
    </location>
</feature>
<feature type="helix" evidence="18">
    <location>
        <begin position="274"/>
        <end position="286"/>
    </location>
</feature>
<feature type="strand" evidence="18">
    <location>
        <begin position="287"/>
        <end position="290"/>
    </location>
</feature>
<feature type="helix" evidence="18">
    <location>
        <begin position="293"/>
        <end position="302"/>
    </location>
</feature>
<feature type="turn" evidence="18">
    <location>
        <begin position="303"/>
        <end position="306"/>
    </location>
</feature>
<feature type="helix" evidence="18">
    <location>
        <begin position="308"/>
        <end position="319"/>
    </location>
</feature>
<feature type="helix" evidence="18">
    <location>
        <begin position="323"/>
        <end position="330"/>
    </location>
</feature>
<feature type="helix" evidence="18">
    <location>
        <begin position="333"/>
        <end position="343"/>
    </location>
</feature>
<sequence>MAMVSEFLKQAWFIDNEEQEYIKTVKGSKGGPGSAVSPYPTFNPSSDVEASHKAITVKGVDEATIIEIHTKRTNAQRQQIKAAYLQEKGKPLDEALKKALTGHLEEVALALLKTPAQFDADELRAAMKGLGTDEDTLNEILASRTNREIREINRVYKEELKRDLAKDITSDTSGDYQKALLSLAKGDRSEDLAINDDLADTDARALYEAGERRKGTDLNVFITILTTRSYLHLRRVFQKYSKYSKHDMNKVLDLELKGDIENCLTVVVKCATSKPMFFAEKLHQAMKGNGTRHKTLIRIMVSRSEIDMNDIKACYQKLYGISLCQAILDETKGDYEKILVALCGGD</sequence>